<reference key="1">
    <citation type="journal article" date="2015" name="Genome Announc.">
        <title>Complete genome sequence of Anaeromyxobacter sp. Fw109-5, an anaerobic, metal-reducing bacterium isolated from a contaminated subsurface environment.</title>
        <authorList>
            <person name="Hwang C."/>
            <person name="Copeland A."/>
            <person name="Lucas S."/>
            <person name="Lapidus A."/>
            <person name="Barry K."/>
            <person name="Glavina Del Rio T."/>
            <person name="Dalin E."/>
            <person name="Tice H."/>
            <person name="Pitluck S."/>
            <person name="Sims D."/>
            <person name="Brettin T."/>
            <person name="Bruce D.C."/>
            <person name="Detter J.C."/>
            <person name="Han C.S."/>
            <person name="Schmutz J."/>
            <person name="Larimer F.W."/>
            <person name="Land M.L."/>
            <person name="Hauser L.J."/>
            <person name="Kyrpides N."/>
            <person name="Lykidis A."/>
            <person name="Richardson P."/>
            <person name="Belieav A."/>
            <person name="Sanford R.A."/>
            <person name="Loeffler F.E."/>
            <person name="Fields M.W."/>
        </authorList>
    </citation>
    <scope>NUCLEOTIDE SEQUENCE [LARGE SCALE GENOMIC DNA]</scope>
    <source>
        <strain>Fw109-5</strain>
    </source>
</reference>
<accession>A7HCC4</accession>
<feature type="chain" id="PRO_1000019183" description="Enolase">
    <location>
        <begin position="1"/>
        <end position="429"/>
    </location>
</feature>
<feature type="active site" description="Proton donor" evidence="1">
    <location>
        <position position="205"/>
    </location>
</feature>
<feature type="active site" description="Proton acceptor" evidence="1">
    <location>
        <position position="339"/>
    </location>
</feature>
<feature type="binding site" evidence="1">
    <location>
        <position position="163"/>
    </location>
    <ligand>
        <name>(2R)-2-phosphoglycerate</name>
        <dbReference type="ChEBI" id="CHEBI:58289"/>
    </ligand>
</feature>
<feature type="binding site" evidence="1">
    <location>
        <position position="242"/>
    </location>
    <ligand>
        <name>Mg(2+)</name>
        <dbReference type="ChEBI" id="CHEBI:18420"/>
    </ligand>
</feature>
<feature type="binding site" evidence="1">
    <location>
        <position position="287"/>
    </location>
    <ligand>
        <name>Mg(2+)</name>
        <dbReference type="ChEBI" id="CHEBI:18420"/>
    </ligand>
</feature>
<feature type="binding site" evidence="1">
    <location>
        <position position="314"/>
    </location>
    <ligand>
        <name>Mg(2+)</name>
        <dbReference type="ChEBI" id="CHEBI:18420"/>
    </ligand>
</feature>
<feature type="binding site" evidence="1">
    <location>
        <position position="339"/>
    </location>
    <ligand>
        <name>(2R)-2-phosphoglycerate</name>
        <dbReference type="ChEBI" id="CHEBI:58289"/>
    </ligand>
</feature>
<feature type="binding site" evidence="1">
    <location>
        <position position="368"/>
    </location>
    <ligand>
        <name>(2R)-2-phosphoglycerate</name>
        <dbReference type="ChEBI" id="CHEBI:58289"/>
    </ligand>
</feature>
<feature type="binding site" evidence="1">
    <location>
        <position position="369"/>
    </location>
    <ligand>
        <name>(2R)-2-phosphoglycerate</name>
        <dbReference type="ChEBI" id="CHEBI:58289"/>
    </ligand>
</feature>
<feature type="binding site" evidence="1">
    <location>
        <position position="390"/>
    </location>
    <ligand>
        <name>(2R)-2-phosphoglycerate</name>
        <dbReference type="ChEBI" id="CHEBI:58289"/>
    </ligand>
</feature>
<name>ENO_ANADF</name>
<evidence type="ECO:0000255" key="1">
    <source>
        <dbReference type="HAMAP-Rule" id="MF_00318"/>
    </source>
</evidence>
<dbReference type="EC" id="4.2.1.11" evidence="1"/>
<dbReference type="EMBL" id="CP000769">
    <property type="protein sequence ID" value="ABS26370.1"/>
    <property type="molecule type" value="Genomic_DNA"/>
</dbReference>
<dbReference type="RefSeq" id="WP_012096951.1">
    <property type="nucleotide sequence ID" value="NC_009675.1"/>
</dbReference>
<dbReference type="SMR" id="A7HCC4"/>
<dbReference type="STRING" id="404589.Anae109_2168"/>
<dbReference type="KEGG" id="afw:Anae109_2168"/>
<dbReference type="eggNOG" id="COG0148">
    <property type="taxonomic scope" value="Bacteria"/>
</dbReference>
<dbReference type="HOGENOM" id="CLU_031223_2_1_7"/>
<dbReference type="OrthoDB" id="9804716at2"/>
<dbReference type="UniPathway" id="UPA00109">
    <property type="reaction ID" value="UER00187"/>
</dbReference>
<dbReference type="Proteomes" id="UP000006382">
    <property type="component" value="Chromosome"/>
</dbReference>
<dbReference type="GO" id="GO:0009986">
    <property type="term" value="C:cell surface"/>
    <property type="evidence" value="ECO:0007669"/>
    <property type="project" value="UniProtKB-SubCell"/>
</dbReference>
<dbReference type="GO" id="GO:0005576">
    <property type="term" value="C:extracellular region"/>
    <property type="evidence" value="ECO:0007669"/>
    <property type="project" value="UniProtKB-SubCell"/>
</dbReference>
<dbReference type="GO" id="GO:0000015">
    <property type="term" value="C:phosphopyruvate hydratase complex"/>
    <property type="evidence" value="ECO:0007669"/>
    <property type="project" value="InterPro"/>
</dbReference>
<dbReference type="GO" id="GO:0000287">
    <property type="term" value="F:magnesium ion binding"/>
    <property type="evidence" value="ECO:0007669"/>
    <property type="project" value="UniProtKB-UniRule"/>
</dbReference>
<dbReference type="GO" id="GO:0004634">
    <property type="term" value="F:phosphopyruvate hydratase activity"/>
    <property type="evidence" value="ECO:0007669"/>
    <property type="project" value="UniProtKB-UniRule"/>
</dbReference>
<dbReference type="GO" id="GO:0006096">
    <property type="term" value="P:glycolytic process"/>
    <property type="evidence" value="ECO:0007669"/>
    <property type="project" value="UniProtKB-UniRule"/>
</dbReference>
<dbReference type="CDD" id="cd03313">
    <property type="entry name" value="enolase"/>
    <property type="match status" value="1"/>
</dbReference>
<dbReference type="FunFam" id="3.20.20.120:FF:000001">
    <property type="entry name" value="Enolase"/>
    <property type="match status" value="1"/>
</dbReference>
<dbReference type="FunFam" id="3.30.390.10:FF:000001">
    <property type="entry name" value="Enolase"/>
    <property type="match status" value="1"/>
</dbReference>
<dbReference type="Gene3D" id="3.20.20.120">
    <property type="entry name" value="Enolase-like C-terminal domain"/>
    <property type="match status" value="1"/>
</dbReference>
<dbReference type="Gene3D" id="3.30.390.10">
    <property type="entry name" value="Enolase-like, N-terminal domain"/>
    <property type="match status" value="1"/>
</dbReference>
<dbReference type="HAMAP" id="MF_00318">
    <property type="entry name" value="Enolase"/>
    <property type="match status" value="1"/>
</dbReference>
<dbReference type="InterPro" id="IPR000941">
    <property type="entry name" value="Enolase"/>
</dbReference>
<dbReference type="InterPro" id="IPR036849">
    <property type="entry name" value="Enolase-like_C_sf"/>
</dbReference>
<dbReference type="InterPro" id="IPR029017">
    <property type="entry name" value="Enolase-like_N"/>
</dbReference>
<dbReference type="InterPro" id="IPR020810">
    <property type="entry name" value="Enolase_C"/>
</dbReference>
<dbReference type="InterPro" id="IPR020809">
    <property type="entry name" value="Enolase_CS"/>
</dbReference>
<dbReference type="InterPro" id="IPR020811">
    <property type="entry name" value="Enolase_N"/>
</dbReference>
<dbReference type="NCBIfam" id="TIGR01060">
    <property type="entry name" value="eno"/>
    <property type="match status" value="1"/>
</dbReference>
<dbReference type="PANTHER" id="PTHR11902">
    <property type="entry name" value="ENOLASE"/>
    <property type="match status" value="1"/>
</dbReference>
<dbReference type="PANTHER" id="PTHR11902:SF1">
    <property type="entry name" value="ENOLASE"/>
    <property type="match status" value="1"/>
</dbReference>
<dbReference type="Pfam" id="PF00113">
    <property type="entry name" value="Enolase_C"/>
    <property type="match status" value="1"/>
</dbReference>
<dbReference type="Pfam" id="PF03952">
    <property type="entry name" value="Enolase_N"/>
    <property type="match status" value="1"/>
</dbReference>
<dbReference type="PIRSF" id="PIRSF001400">
    <property type="entry name" value="Enolase"/>
    <property type="match status" value="1"/>
</dbReference>
<dbReference type="PRINTS" id="PR00148">
    <property type="entry name" value="ENOLASE"/>
</dbReference>
<dbReference type="SFLD" id="SFLDF00002">
    <property type="entry name" value="enolase"/>
    <property type="match status" value="1"/>
</dbReference>
<dbReference type="SFLD" id="SFLDG00178">
    <property type="entry name" value="enolase"/>
    <property type="match status" value="1"/>
</dbReference>
<dbReference type="SMART" id="SM01192">
    <property type="entry name" value="Enolase_C"/>
    <property type="match status" value="1"/>
</dbReference>
<dbReference type="SMART" id="SM01193">
    <property type="entry name" value="Enolase_N"/>
    <property type="match status" value="1"/>
</dbReference>
<dbReference type="SUPFAM" id="SSF51604">
    <property type="entry name" value="Enolase C-terminal domain-like"/>
    <property type="match status" value="1"/>
</dbReference>
<dbReference type="SUPFAM" id="SSF54826">
    <property type="entry name" value="Enolase N-terminal domain-like"/>
    <property type="match status" value="1"/>
</dbReference>
<dbReference type="PROSITE" id="PS00164">
    <property type="entry name" value="ENOLASE"/>
    <property type="match status" value="1"/>
</dbReference>
<organism>
    <name type="scientific">Anaeromyxobacter sp. (strain Fw109-5)</name>
    <dbReference type="NCBI Taxonomy" id="404589"/>
    <lineage>
        <taxon>Bacteria</taxon>
        <taxon>Pseudomonadati</taxon>
        <taxon>Myxococcota</taxon>
        <taxon>Myxococcia</taxon>
        <taxon>Myxococcales</taxon>
        <taxon>Cystobacterineae</taxon>
        <taxon>Anaeromyxobacteraceae</taxon>
        <taxon>Anaeromyxobacter</taxon>
    </lineage>
</organism>
<protein>
    <recommendedName>
        <fullName evidence="1">Enolase</fullName>
        <ecNumber evidence="1">4.2.1.11</ecNumber>
    </recommendedName>
    <alternativeName>
        <fullName evidence="1">2-phospho-D-glycerate hydro-lyase</fullName>
    </alternativeName>
    <alternativeName>
        <fullName evidence="1">2-phosphoglycerate dehydratase</fullName>
    </alternativeName>
</protein>
<sequence length="429" mass="44968">MTEIINVTAREILDSRGNPTIEVEVAVGTGDVGRAAVPSGASTGEHEALELRDGDKGRYLGKGVRKAIANVMDEIAPAVVGLDAGDQAVLDQRMIELDGTATKSKLGANAILGVSLAAAKAAAQAHGLPLYRYVGGAGARTLPVPLMNILNGGAHADSNVDIQEFMVVPLGAPSFAEALRYGAEVFHALKAVLKKKGAGTGVGDEGGYAPNLASNEEALALIMKAIEQAGLKAGDDVGLALDCAASEFFEKSSGKYDLEGEGKAFDGKGLVDFYASLAAKYPIVSIEDGCAEDDWATWKLLTERLGSKLQLVGDDLFVTNVTRLSRGIAEGVANSILVKVNQIGSLTETLEAVRMAHRAGYTSVMSHRSGETEDTTIADLSVACDCGQIKTGSASRTDRVAKYNQLLRIEEELGKAARYAGRDAFRALR</sequence>
<gene>
    <name evidence="1" type="primary">eno</name>
    <name type="ordered locus">Anae109_2168</name>
</gene>
<keyword id="KW-0963">Cytoplasm</keyword>
<keyword id="KW-0324">Glycolysis</keyword>
<keyword id="KW-0456">Lyase</keyword>
<keyword id="KW-0460">Magnesium</keyword>
<keyword id="KW-0479">Metal-binding</keyword>
<keyword id="KW-1185">Reference proteome</keyword>
<keyword id="KW-0964">Secreted</keyword>
<proteinExistence type="inferred from homology"/>
<comment type="function">
    <text evidence="1">Catalyzes the reversible conversion of 2-phosphoglycerate (2-PG) into phosphoenolpyruvate (PEP). It is essential for the degradation of carbohydrates via glycolysis.</text>
</comment>
<comment type="catalytic activity">
    <reaction evidence="1">
        <text>(2R)-2-phosphoglycerate = phosphoenolpyruvate + H2O</text>
        <dbReference type="Rhea" id="RHEA:10164"/>
        <dbReference type="ChEBI" id="CHEBI:15377"/>
        <dbReference type="ChEBI" id="CHEBI:58289"/>
        <dbReference type="ChEBI" id="CHEBI:58702"/>
        <dbReference type="EC" id="4.2.1.11"/>
    </reaction>
</comment>
<comment type="cofactor">
    <cofactor evidence="1">
        <name>Mg(2+)</name>
        <dbReference type="ChEBI" id="CHEBI:18420"/>
    </cofactor>
    <text evidence="1">Binds a second Mg(2+) ion via substrate during catalysis.</text>
</comment>
<comment type="pathway">
    <text evidence="1">Carbohydrate degradation; glycolysis; pyruvate from D-glyceraldehyde 3-phosphate: step 4/5.</text>
</comment>
<comment type="subcellular location">
    <subcellularLocation>
        <location evidence="1">Cytoplasm</location>
    </subcellularLocation>
    <subcellularLocation>
        <location evidence="1">Secreted</location>
    </subcellularLocation>
    <subcellularLocation>
        <location evidence="1">Cell surface</location>
    </subcellularLocation>
    <text evidence="1">Fractions of enolase are present in both the cytoplasm and on the cell surface.</text>
</comment>
<comment type="similarity">
    <text evidence="1">Belongs to the enolase family.</text>
</comment>